<protein>
    <recommendedName>
        <fullName evidence="1">Acyl carrier protein</fullName>
        <shortName evidence="1">ACP</shortName>
    </recommendedName>
</protein>
<reference key="1">
    <citation type="journal article" date="2007" name="Genome Biol.">
        <title>Characterization and modeling of the Haemophilus influenzae core and supragenomes based on the complete genomic sequences of Rd and 12 clinical nontypeable strains.</title>
        <authorList>
            <person name="Hogg J.S."/>
            <person name="Hu F.Z."/>
            <person name="Janto B."/>
            <person name="Boissy R."/>
            <person name="Hayes J."/>
            <person name="Keefe R."/>
            <person name="Post J.C."/>
            <person name="Ehrlich G.D."/>
        </authorList>
    </citation>
    <scope>NUCLEOTIDE SEQUENCE [LARGE SCALE GENOMIC DNA]</scope>
    <source>
        <strain>PittEE</strain>
    </source>
</reference>
<evidence type="ECO:0000255" key="1">
    <source>
        <dbReference type="HAMAP-Rule" id="MF_01217"/>
    </source>
</evidence>
<evidence type="ECO:0000255" key="2">
    <source>
        <dbReference type="PROSITE-ProRule" id="PRU00258"/>
    </source>
</evidence>
<accession>A5UAZ7</accession>
<keyword id="KW-0963">Cytoplasm</keyword>
<keyword id="KW-0275">Fatty acid biosynthesis</keyword>
<keyword id="KW-0276">Fatty acid metabolism</keyword>
<keyword id="KW-0444">Lipid biosynthesis</keyword>
<keyword id="KW-0443">Lipid metabolism</keyword>
<keyword id="KW-0596">Phosphopantetheine</keyword>
<keyword id="KW-0597">Phosphoprotein</keyword>
<gene>
    <name evidence="1" type="primary">acpP</name>
    <name type="ordered locus">CGSHiEE_02515</name>
</gene>
<proteinExistence type="inferred from homology"/>
<organism>
    <name type="scientific">Haemophilus influenzae (strain PittEE)</name>
    <dbReference type="NCBI Taxonomy" id="374930"/>
    <lineage>
        <taxon>Bacteria</taxon>
        <taxon>Pseudomonadati</taxon>
        <taxon>Pseudomonadota</taxon>
        <taxon>Gammaproteobacteria</taxon>
        <taxon>Pasteurellales</taxon>
        <taxon>Pasteurellaceae</taxon>
        <taxon>Haemophilus</taxon>
    </lineage>
</organism>
<dbReference type="EMBL" id="CP000671">
    <property type="protein sequence ID" value="ABQ97948.1"/>
    <property type="molecule type" value="Genomic_DNA"/>
</dbReference>
<dbReference type="SMR" id="A5UAZ7"/>
<dbReference type="KEGG" id="hip:CGSHiEE_02515"/>
<dbReference type="HOGENOM" id="CLU_108696_5_1_6"/>
<dbReference type="UniPathway" id="UPA00094"/>
<dbReference type="GO" id="GO:0005829">
    <property type="term" value="C:cytosol"/>
    <property type="evidence" value="ECO:0007669"/>
    <property type="project" value="TreeGrafter"/>
</dbReference>
<dbReference type="GO" id="GO:0016020">
    <property type="term" value="C:membrane"/>
    <property type="evidence" value="ECO:0007669"/>
    <property type="project" value="GOC"/>
</dbReference>
<dbReference type="GO" id="GO:0000035">
    <property type="term" value="F:acyl binding"/>
    <property type="evidence" value="ECO:0007669"/>
    <property type="project" value="TreeGrafter"/>
</dbReference>
<dbReference type="GO" id="GO:0000036">
    <property type="term" value="F:acyl carrier activity"/>
    <property type="evidence" value="ECO:0007669"/>
    <property type="project" value="UniProtKB-UniRule"/>
</dbReference>
<dbReference type="GO" id="GO:0009245">
    <property type="term" value="P:lipid A biosynthetic process"/>
    <property type="evidence" value="ECO:0007669"/>
    <property type="project" value="TreeGrafter"/>
</dbReference>
<dbReference type="FunFam" id="1.10.1200.10:FF:000001">
    <property type="entry name" value="Acyl carrier protein"/>
    <property type="match status" value="1"/>
</dbReference>
<dbReference type="Gene3D" id="1.10.1200.10">
    <property type="entry name" value="ACP-like"/>
    <property type="match status" value="1"/>
</dbReference>
<dbReference type="HAMAP" id="MF_01217">
    <property type="entry name" value="Acyl_carrier"/>
    <property type="match status" value="1"/>
</dbReference>
<dbReference type="InterPro" id="IPR003231">
    <property type="entry name" value="ACP"/>
</dbReference>
<dbReference type="InterPro" id="IPR036736">
    <property type="entry name" value="ACP-like_sf"/>
</dbReference>
<dbReference type="InterPro" id="IPR009081">
    <property type="entry name" value="PP-bd_ACP"/>
</dbReference>
<dbReference type="InterPro" id="IPR006162">
    <property type="entry name" value="Ppantetheine_attach_site"/>
</dbReference>
<dbReference type="NCBIfam" id="TIGR00517">
    <property type="entry name" value="acyl_carrier"/>
    <property type="match status" value="1"/>
</dbReference>
<dbReference type="NCBIfam" id="NF002148">
    <property type="entry name" value="PRK00982.1-2"/>
    <property type="match status" value="1"/>
</dbReference>
<dbReference type="NCBIfam" id="NF002149">
    <property type="entry name" value="PRK00982.1-3"/>
    <property type="match status" value="1"/>
</dbReference>
<dbReference type="NCBIfam" id="NF002150">
    <property type="entry name" value="PRK00982.1-4"/>
    <property type="match status" value="1"/>
</dbReference>
<dbReference type="NCBIfam" id="NF002151">
    <property type="entry name" value="PRK00982.1-5"/>
    <property type="match status" value="1"/>
</dbReference>
<dbReference type="PANTHER" id="PTHR20863">
    <property type="entry name" value="ACYL CARRIER PROTEIN"/>
    <property type="match status" value="1"/>
</dbReference>
<dbReference type="PANTHER" id="PTHR20863:SF76">
    <property type="entry name" value="CARRIER DOMAIN-CONTAINING PROTEIN"/>
    <property type="match status" value="1"/>
</dbReference>
<dbReference type="Pfam" id="PF00550">
    <property type="entry name" value="PP-binding"/>
    <property type="match status" value="1"/>
</dbReference>
<dbReference type="SUPFAM" id="SSF47336">
    <property type="entry name" value="ACP-like"/>
    <property type="match status" value="1"/>
</dbReference>
<dbReference type="PROSITE" id="PS50075">
    <property type="entry name" value="CARRIER"/>
    <property type="match status" value="1"/>
</dbReference>
<dbReference type="PROSITE" id="PS00012">
    <property type="entry name" value="PHOSPHOPANTETHEINE"/>
    <property type="match status" value="1"/>
</dbReference>
<sequence>MSIEERVKKIIVEQLGVKEEDVKPEASFVEDLGADSLDTVELVMALEEEFDIEIPDEEAEKITTVQSAIDYVQNNQ</sequence>
<name>ACP_HAEIE</name>
<comment type="function">
    <text evidence="1">Carrier of the growing fatty acid chain in fatty acid biosynthesis.</text>
</comment>
<comment type="pathway">
    <text evidence="1">Lipid metabolism; fatty acid biosynthesis.</text>
</comment>
<comment type="subcellular location">
    <subcellularLocation>
        <location evidence="1">Cytoplasm</location>
    </subcellularLocation>
</comment>
<comment type="PTM">
    <text evidence="1">4'-phosphopantetheine is transferred from CoA to a specific serine of apo-ACP by AcpS. This modification is essential for activity because fatty acids are bound in thioester linkage to the sulfhydryl of the prosthetic group.</text>
</comment>
<comment type="similarity">
    <text evidence="1">Belongs to the acyl carrier protein (ACP) family.</text>
</comment>
<feature type="chain" id="PRO_1000066617" description="Acyl carrier protein">
    <location>
        <begin position="1"/>
        <end position="76"/>
    </location>
</feature>
<feature type="domain" description="Carrier" evidence="2">
    <location>
        <begin position="1"/>
        <end position="76"/>
    </location>
</feature>
<feature type="modified residue" description="O-(pantetheine 4'-phosphoryl)serine" evidence="2">
    <location>
        <position position="36"/>
    </location>
</feature>